<accession>G5EFH8</accession>
<accession>H9G2P9</accession>
<name>CBS1_CAEEL</name>
<proteinExistence type="evidence at protein level"/>
<organism evidence="6">
    <name type="scientific">Caenorhabditis elegans</name>
    <dbReference type="NCBI Taxonomy" id="6239"/>
    <lineage>
        <taxon>Eukaryota</taxon>
        <taxon>Metazoa</taxon>
        <taxon>Ecdysozoa</taxon>
        <taxon>Nematoda</taxon>
        <taxon>Chromadorea</taxon>
        <taxon>Rhabditida</taxon>
        <taxon>Rhabditina</taxon>
        <taxon>Rhabditomorpha</taxon>
        <taxon>Rhabditoidea</taxon>
        <taxon>Rhabditidae</taxon>
        <taxon>Peloderinae</taxon>
        <taxon>Caenorhabditis</taxon>
    </lineage>
</organism>
<dbReference type="EC" id="4.2.1.22" evidence="2"/>
<dbReference type="EMBL" id="BX284606">
    <property type="protein sequence ID" value="CAA88980.3"/>
    <property type="molecule type" value="Genomic_DNA"/>
</dbReference>
<dbReference type="EMBL" id="BX284606">
    <property type="protein sequence ID" value="CCG28248.1"/>
    <property type="molecule type" value="Genomic_DNA"/>
</dbReference>
<dbReference type="PIR" id="H89621">
    <property type="entry name" value="H89621"/>
</dbReference>
<dbReference type="PIR" id="T27526">
    <property type="entry name" value="T27526"/>
</dbReference>
<dbReference type="RefSeq" id="NP_001257091.1">
    <molecule id="G5EFH8-1"/>
    <property type="nucleotide sequence ID" value="NM_001270162.4"/>
</dbReference>
<dbReference type="RefSeq" id="NP_001257092.1">
    <molecule id="G5EFH8-2"/>
    <property type="nucleotide sequence ID" value="NM_001270163.4"/>
</dbReference>
<dbReference type="SMR" id="G5EFH8"/>
<dbReference type="FunCoup" id="G5EFH8">
    <property type="interactions" value="481"/>
</dbReference>
<dbReference type="STRING" id="6239.ZC373.1a.1"/>
<dbReference type="PaxDb" id="6239-ZC373.1a"/>
<dbReference type="PeptideAtlas" id="G5EFH8"/>
<dbReference type="EnsemblMetazoa" id="ZC373.1a.1">
    <molecule id="G5EFH8-1"/>
    <property type="protein sequence ID" value="ZC373.1a.1"/>
    <property type="gene ID" value="WBGene00013866"/>
</dbReference>
<dbReference type="EnsemblMetazoa" id="ZC373.1b.1">
    <molecule id="G5EFH8-2"/>
    <property type="protein sequence ID" value="ZC373.1b.1"/>
    <property type="gene ID" value="WBGene00013866"/>
</dbReference>
<dbReference type="GeneID" id="181215"/>
<dbReference type="KEGG" id="cel:CELE_ZC373.1"/>
<dbReference type="AGR" id="WB:WBGene00013866"/>
<dbReference type="CTD" id="181215"/>
<dbReference type="WormBase" id="ZC373.1a">
    <molecule id="G5EFH8-1"/>
    <property type="protein sequence ID" value="CE31670"/>
    <property type="gene ID" value="WBGene00013866"/>
    <property type="gene designation" value="cbs-1"/>
</dbReference>
<dbReference type="WormBase" id="ZC373.1b">
    <molecule id="G5EFH8-2"/>
    <property type="protein sequence ID" value="CE47092"/>
    <property type="gene ID" value="WBGene00013866"/>
    <property type="gene designation" value="cbs-1"/>
</dbReference>
<dbReference type="eggNOG" id="KOG1252">
    <property type="taxonomic scope" value="Eukaryota"/>
</dbReference>
<dbReference type="GeneTree" id="ENSGT00510000047027"/>
<dbReference type="HOGENOM" id="CLU_391940_0_0_1"/>
<dbReference type="InParanoid" id="G5EFH8"/>
<dbReference type="OMA" id="MNERHFL"/>
<dbReference type="OrthoDB" id="728at2759"/>
<dbReference type="PhylomeDB" id="G5EFH8"/>
<dbReference type="Reactome" id="R-CEL-1614603">
    <property type="pathway name" value="Cysteine formation from homocysteine"/>
</dbReference>
<dbReference type="UniPathway" id="UPA00136">
    <property type="reaction ID" value="UER00201"/>
</dbReference>
<dbReference type="PRO" id="PR:G5EFH8"/>
<dbReference type="Proteomes" id="UP000001940">
    <property type="component" value="Chromosome X"/>
</dbReference>
<dbReference type="Bgee" id="WBGene00013866">
    <property type="expression patterns" value="Expressed in larva and 4 other cell types or tissues"/>
</dbReference>
<dbReference type="ExpressionAtlas" id="G5EFH8">
    <property type="expression patterns" value="baseline and differential"/>
</dbReference>
<dbReference type="GO" id="GO:0005737">
    <property type="term" value="C:cytoplasm"/>
    <property type="evidence" value="ECO:0000314"/>
    <property type="project" value="WormBase"/>
</dbReference>
<dbReference type="GO" id="GO:0004122">
    <property type="term" value="F:cystathionine beta-synthase activity"/>
    <property type="evidence" value="ECO:0000314"/>
    <property type="project" value="WormBase"/>
</dbReference>
<dbReference type="GO" id="GO:0004124">
    <property type="term" value="F:cysteine synthase activity"/>
    <property type="evidence" value="ECO:0000314"/>
    <property type="project" value="WormBase"/>
</dbReference>
<dbReference type="GO" id="GO:0030170">
    <property type="term" value="F:pyridoxal phosphate binding"/>
    <property type="evidence" value="ECO:0000314"/>
    <property type="project" value="WormBase"/>
</dbReference>
<dbReference type="GO" id="GO:0006535">
    <property type="term" value="P:cysteine biosynthetic process from serine"/>
    <property type="evidence" value="ECO:0000318"/>
    <property type="project" value="GO_Central"/>
</dbReference>
<dbReference type="GO" id="GO:0044272">
    <property type="term" value="P:sulfur compound biosynthetic process"/>
    <property type="evidence" value="ECO:0000314"/>
    <property type="project" value="WormBase"/>
</dbReference>
<dbReference type="CDD" id="cd01561">
    <property type="entry name" value="CBS_like"/>
    <property type="match status" value="1"/>
</dbReference>
<dbReference type="FunFam" id="3.40.50.1100:FF:000099">
    <property type="entry name" value="Cystathionine Beta-Synthase"/>
    <property type="match status" value="1"/>
</dbReference>
<dbReference type="FunFam" id="3.40.50.1100:FF:000003">
    <property type="entry name" value="Cystathionine beta-synthase"/>
    <property type="match status" value="1"/>
</dbReference>
<dbReference type="FunFam" id="3.40.50.1100:FF:000118">
    <property type="entry name" value="Related to CYS4-cystathionine beta-synthase"/>
    <property type="match status" value="1"/>
</dbReference>
<dbReference type="Gene3D" id="3.40.50.1100">
    <property type="match status" value="4"/>
</dbReference>
<dbReference type="InterPro" id="IPR050214">
    <property type="entry name" value="Cys_Synth/Cystath_Beta-Synth"/>
</dbReference>
<dbReference type="InterPro" id="IPR001926">
    <property type="entry name" value="TrpB-like_PALP"/>
</dbReference>
<dbReference type="InterPro" id="IPR036052">
    <property type="entry name" value="TrpB-like_PALP_sf"/>
</dbReference>
<dbReference type="PANTHER" id="PTHR10314">
    <property type="entry name" value="CYSTATHIONINE BETA-SYNTHASE"/>
    <property type="match status" value="1"/>
</dbReference>
<dbReference type="Pfam" id="PF00291">
    <property type="entry name" value="PALP"/>
    <property type="match status" value="2"/>
</dbReference>
<dbReference type="SUPFAM" id="SSF53686">
    <property type="entry name" value="Tryptophan synthase beta subunit-like PLP-dependent enzymes"/>
    <property type="match status" value="2"/>
</dbReference>
<sequence length="704" mass="76353">MIQNEVSATHGSTKKGITYNTILEAAQRPTPLVPLKKLKVEHQLQSDIYVKLEYLNIAGSLEDRTADKAFQFAEEIGVVRGDEVFVTAGGSAAISYATVAAVKGIKLTIYAPKGEFDLVDTVLHTLGVKTVELPFGTFAEARVQTDEAAQQKGVFSLNKFTTNAAFVANLQKTALEIEKAVNNKSIGKVGAVVIPLNTGAAAAGIAAYYKGIGEHGVRVVGVTCKKDTIPEMGLDLKNDLLQEYNVEKREVEEDEAYSFTRHLIGTEGIMAGPSSGAAVLEAIKLAKELPAGSTIVVVLMDGIRNYLRHFLDDDWITANKKDVVTRKDGPQPNSIYDPKVLVYDPTKLAGEWTQDPETKSWSHSEVEFNKFNPERPLVLDTVLDAIGKTPLVKLQHIPKAHGVKCNVYVKCEYMNAGGSTKDRIAKRMVEIAEKTGKPGKLVPGVTLIEPTSGNTGIGLSLASAVRGYKCIITMPKKMSKEKSIAMASLGSTIIRTPNEAGFDSPHSHIGVALRLKSEIQDAVVLDQYCNPGNPLAHYEETAEEIIYDMGDKHIDLVVLTAGTGGTVTGISRKIHERIPTAKVVGVDPHGSILAGPAETDIDFYEVEGIGYDFLPGTLDTSAIDYWAKSHDKESFLMARELIRSEGILCGGSSGCAVHYALEECKSLNLPAEANVVVLLPDGIRNYITKFLDDDWMNERHFLDA</sequence>
<comment type="function">
    <text evidence="2 3">Hydro-lyase catalyzing the first step of the transsulfuration pathway, where the hydroxyl group of L-serine is displaced by L-homocysteine in a beta-replacement reaction to form L-cystathionine, the precursor of L-cysteine (PubMed:22240119). Plays a role in maintaining homocysteine homeostasis (PubMed:22240119). Involved in cold-induced somatic longevity mediated by prostaglandin E2 (PGE2) signals from adult germ cells, perhaps acting via a role in the production of hydrogen sulfide (H2S) (PubMed:31485561). Required for normal development (PubMed:22240119).</text>
</comment>
<comment type="catalytic activity">
    <reaction evidence="2">
        <text>L-homocysteine + L-serine = L,L-cystathionine + H2O</text>
        <dbReference type="Rhea" id="RHEA:10112"/>
        <dbReference type="ChEBI" id="CHEBI:15377"/>
        <dbReference type="ChEBI" id="CHEBI:33384"/>
        <dbReference type="ChEBI" id="CHEBI:58161"/>
        <dbReference type="ChEBI" id="CHEBI:58199"/>
        <dbReference type="EC" id="4.2.1.22"/>
    </reaction>
</comment>
<comment type="cofactor">
    <cofactor evidence="1">
        <name>pyridoxal 5'-phosphate</name>
        <dbReference type="ChEBI" id="CHEBI:597326"/>
    </cofactor>
</comment>
<comment type="biophysicochemical properties">
    <absorption>
        <max evidence="2">412 nm</max>
    </absorption>
    <kinetics>
        <KM evidence="2">5.57 mM for serine as substrate (at 16 degrees Celsius)</KM>
        <KM evidence="2">4.29 mM for homocysteine as substrate (at 16 degrees Celsius)</KM>
        <Vmax evidence="2">1.5 mmol/h/mg enzyme with serine as substrate (at pH 7.0 and 25 degrees Celsius)</Vmax>
        <Vmax evidence="2">0.3 mmol/h/mg enzyme with cysteine as substrate (at pH 7.0 and 25 degrees Celsius)</Vmax>
    </kinetics>
</comment>
<comment type="pathway">
    <text evidence="1">Amino-acid biosynthesis; L-cysteine biosynthesis; L-cysteine from L-homocysteine and L-serine: step 1/2.</text>
</comment>
<comment type="subunit">
    <text evidence="2">Monomer.</text>
</comment>
<comment type="subunit">
    <molecule>Isoform b</molecule>
    <text evidence="2">Does not bind pyridoxal 5'-phosphate, PLP; which may explain why this isoform has virtually undetectable catalytic activity.</text>
</comment>
<comment type="subcellular location">
    <subcellularLocation>
        <location evidence="2">Cytoplasm</location>
    </subcellularLocation>
</comment>
<comment type="alternative products">
    <event type="alternative splicing"/>
    <isoform>
        <id>G5EFH8-1</id>
        <name evidence="7">a</name>
        <sequence type="displayed"/>
    </isoform>
    <isoform>
        <id>G5EFH8-2</id>
        <name evidence="8">b</name>
        <sequence type="described" ref="VSP_061800"/>
    </isoform>
</comment>
<comment type="developmental stage">
    <text evidence="2">Expressed in the hypodermis, intestine, body-wall muscle cells and pharyngeal muscles pm3, pm4, pm5, pm6, pm7 and pm8 in all larval stages as well as in adults.</text>
</comment>
<comment type="induction">
    <text evidence="3">Expression in the intestine up-regulated by prostaglandin E2 (PGE2) (PubMed:31485561). Expression in the intestine and body muscle up-regulated at 15 degrees Celsius (PubMed:31485561).</text>
</comment>
<comment type="disruption phenotype">
    <text evidence="2 3">RNAi-mediated knockdown causes developmental delay (PubMed:22240119). Larvae have shorter body length (PubMed:22240119). Larvae exhibit homocysteine and cystathionine levels about 10x and 1.6x higher than normal, respectively (PubMed:22240119). Knockdown at day 1 of adulthood decreases longevity at 15 or 10 degrees Celsius, but not at 25 degrees Celsius (PubMed:31485561). Decreases production of hydrogen sulfide (H2S) at 15 degrees Celsius (PubMed:31485561).</text>
</comment>
<comment type="similarity">
    <text evidence="5">Belongs to the cysteine synthase/cystathionine beta-synthase family.</text>
</comment>
<gene>
    <name evidence="7" type="primary">cbs-1</name>
    <name evidence="7" type="ORF">ZC373.1</name>
</gene>
<evidence type="ECO:0000250" key="1">
    <source>
        <dbReference type="UniProtKB" id="P35520"/>
    </source>
</evidence>
<evidence type="ECO:0000269" key="2">
    <source>
    </source>
</evidence>
<evidence type="ECO:0000269" key="3">
    <source>
    </source>
</evidence>
<evidence type="ECO:0000303" key="4">
    <source>
    </source>
</evidence>
<evidence type="ECO:0000305" key="5"/>
<evidence type="ECO:0000312" key="6">
    <source>
        <dbReference type="Proteomes" id="UP000001940"/>
    </source>
</evidence>
<evidence type="ECO:0000312" key="7">
    <source>
        <dbReference type="WormBase" id="ZC373.1a"/>
    </source>
</evidence>
<evidence type="ECO:0000312" key="8">
    <source>
        <dbReference type="WormBase" id="ZC373.1b"/>
    </source>
</evidence>
<protein>
    <recommendedName>
        <fullName evidence="4">Cystathionine beta-synthase cbs-1</fullName>
        <ecNumber evidence="2">4.2.1.22</ecNumber>
    </recommendedName>
    <alternativeName>
        <fullName evidence="1">Beta-thionase</fullName>
    </alternativeName>
    <alternativeName>
        <fullName evidence="1">Serine sulfhydrase</fullName>
    </alternativeName>
</protein>
<keyword id="KW-0025">Alternative splicing</keyword>
<keyword id="KW-0028">Amino-acid biosynthesis</keyword>
<keyword id="KW-0198">Cysteine biosynthesis</keyword>
<keyword id="KW-0963">Cytoplasm</keyword>
<keyword id="KW-0456">Lyase</keyword>
<keyword id="KW-0663">Pyridoxal phosphate</keyword>
<keyword id="KW-1185">Reference proteome</keyword>
<reference evidence="6" key="1">
    <citation type="journal article" date="1998" name="Science">
        <title>Genome sequence of the nematode C. elegans: a platform for investigating biology.</title>
        <authorList>
            <consortium name="The C. elegans sequencing consortium"/>
        </authorList>
    </citation>
    <scope>NUCLEOTIDE SEQUENCE [LARGE SCALE GENOMIC DNA]</scope>
    <source>
        <strain evidence="6">Bristol N2</strain>
    </source>
</reference>
<reference evidence="5" key="2">
    <citation type="journal article" date="2012" name="Biochem. J.">
        <title>Novel structural arrangement of nematode cystathionine beta-synthases: characterization of Caenorhabditis elegans CBS-1.</title>
        <authorList>
            <person name="Vozdek R."/>
            <person name="Hnizda A."/>
            <person name="Krijt J."/>
            <person name="Kostrouchova M."/>
            <person name="Kozich V."/>
        </authorList>
    </citation>
    <scope>FUNCTION</scope>
    <scope>CATALYTIC ACTIVITY</scope>
    <scope>BIOPHYSICOCHEMICAL PROPERTIES</scope>
    <scope>SUBUNIT</scope>
    <scope>SUBUNIT (ISOFORM B)</scope>
    <scope>SUBCELLULAR LOCATION</scope>
    <scope>DEVELOPMENTAL STAGE</scope>
    <scope>DISRUPTION PHENOTYPE</scope>
    <scope>MUTAGENESIS OF LYS-421</scope>
</reference>
<reference evidence="5" key="3">
    <citation type="journal article" date="2019" name="Nat. Metab.">
        <title>Prostaglandin signals from adult germ stem cells delay somatic aging of Caenorhabditis elegans.</title>
        <authorList>
            <person name="Lee H.J."/>
            <person name="Noormohammadi A."/>
            <person name="Koyuncu S."/>
            <person name="Calculli G."/>
            <person name="Simic M.S."/>
            <person name="Herholz M."/>
            <person name="Trifunovic A."/>
            <person name="Vilchez D."/>
        </authorList>
    </citation>
    <scope>FUNCTION</scope>
    <scope>INDUCTION BY PROSTAGLANDIN E2</scope>
    <scope>DISRUPTION PHENOTYPE</scope>
</reference>
<feature type="chain" id="PRO_0000457579" description="Cystathionine beta-synthase cbs-1">
    <location>
        <begin position="1"/>
        <end position="704"/>
    </location>
</feature>
<feature type="binding site" evidence="1">
    <location>
        <position position="454"/>
    </location>
    <ligand>
        <name>pyridoxal 5'-phosphate</name>
        <dbReference type="ChEBI" id="CHEBI:597326"/>
    </ligand>
</feature>
<feature type="binding site" evidence="1">
    <location>
        <begin position="562"/>
        <end position="566"/>
    </location>
    <ligand>
        <name>pyridoxal 5'-phosphate</name>
        <dbReference type="ChEBI" id="CHEBI:597326"/>
    </ligand>
</feature>
<feature type="binding site" evidence="1">
    <location>
        <position position="652"/>
    </location>
    <ligand>
        <name>pyridoxal 5'-phosphate</name>
        <dbReference type="ChEBI" id="CHEBI:597326"/>
    </ligand>
</feature>
<feature type="splice variant" id="VSP_061800" description="In isoform b." evidence="5">
    <original>NPERPLVLDTVLDAIGKTPLVKLQHIPKAHGVKCNVYVKCEYMNAGGSTKDRIAKRMVEIAEKTGKPGKLVPGVTLIEPTSGNTGIGLSLASAVRGYKCIITMPKKMSKEKSIAMASLGSTIIRTPNEAGFDSPHSHIGVALRLKSEIQDAVVLDQYCNPGNPLAHYEETAEEIIYDMGDKHIDLVVLTAGTGGTVTGISRKIHERIPTAKVVGVDPHGSILAGPAETDIDFYEVEGIGYDFLPGTLDTSAIDYWAKSHDKESFLMARELIRSEGILCGGSSGCAVHYALEECKSLNLPAEANVVVLLPDGIRNYITKFLDDDWMNERHFLDA</original>
    <variation>KKATGS</variation>
    <location>
        <begin position="372"/>
        <end position="704"/>
    </location>
</feature>
<feature type="mutagenesis site" description="Binds significantly less of the PLP cofactor. Altered fluorescence-based tryptophan spectra." evidence="2">
    <original>K</original>
    <variation>A</variation>
    <location>
        <position position="421"/>
    </location>
</feature>